<feature type="chain" id="PRO_1000000388" description="Argininosuccinate synthase">
    <location>
        <begin position="1"/>
        <end position="406"/>
    </location>
</feature>
<feature type="binding site" evidence="1">
    <location>
        <begin position="11"/>
        <end position="19"/>
    </location>
    <ligand>
        <name>ATP</name>
        <dbReference type="ChEBI" id="CHEBI:30616"/>
    </ligand>
</feature>
<feature type="binding site" evidence="1">
    <location>
        <position position="38"/>
    </location>
    <ligand>
        <name>ATP</name>
        <dbReference type="ChEBI" id="CHEBI:30616"/>
    </ligand>
</feature>
<feature type="binding site" evidence="1">
    <location>
        <position position="91"/>
    </location>
    <ligand>
        <name>L-citrulline</name>
        <dbReference type="ChEBI" id="CHEBI:57743"/>
    </ligand>
</feature>
<feature type="binding site" evidence="1">
    <location>
        <position position="96"/>
    </location>
    <ligand>
        <name>L-citrulline</name>
        <dbReference type="ChEBI" id="CHEBI:57743"/>
    </ligand>
</feature>
<feature type="binding site" evidence="1">
    <location>
        <position position="121"/>
    </location>
    <ligand>
        <name>ATP</name>
        <dbReference type="ChEBI" id="CHEBI:30616"/>
    </ligand>
</feature>
<feature type="binding site" evidence="1">
    <location>
        <position position="123"/>
    </location>
    <ligand>
        <name>L-aspartate</name>
        <dbReference type="ChEBI" id="CHEBI:29991"/>
    </ligand>
</feature>
<feature type="binding site" evidence="1">
    <location>
        <position position="127"/>
    </location>
    <ligand>
        <name>L-aspartate</name>
        <dbReference type="ChEBI" id="CHEBI:29991"/>
    </ligand>
</feature>
<feature type="binding site" evidence="1">
    <location>
        <position position="127"/>
    </location>
    <ligand>
        <name>L-citrulline</name>
        <dbReference type="ChEBI" id="CHEBI:57743"/>
    </ligand>
</feature>
<feature type="binding site" evidence="1">
    <location>
        <position position="128"/>
    </location>
    <ligand>
        <name>L-aspartate</name>
        <dbReference type="ChEBI" id="CHEBI:29991"/>
    </ligand>
</feature>
<feature type="binding site" evidence="1">
    <location>
        <position position="131"/>
    </location>
    <ligand>
        <name>L-citrulline</name>
        <dbReference type="ChEBI" id="CHEBI:57743"/>
    </ligand>
</feature>
<feature type="binding site" evidence="1">
    <location>
        <position position="181"/>
    </location>
    <ligand>
        <name>L-citrulline</name>
        <dbReference type="ChEBI" id="CHEBI:57743"/>
    </ligand>
</feature>
<feature type="binding site" evidence="1">
    <location>
        <position position="190"/>
    </location>
    <ligand>
        <name>L-citrulline</name>
        <dbReference type="ChEBI" id="CHEBI:57743"/>
    </ligand>
</feature>
<feature type="binding site" evidence="1">
    <location>
        <position position="266"/>
    </location>
    <ligand>
        <name>L-citrulline</name>
        <dbReference type="ChEBI" id="CHEBI:57743"/>
    </ligand>
</feature>
<feature type="binding site" evidence="1">
    <location>
        <position position="278"/>
    </location>
    <ligand>
        <name>L-citrulline</name>
        <dbReference type="ChEBI" id="CHEBI:57743"/>
    </ligand>
</feature>
<name>ASSY_CAMJD</name>
<reference key="1">
    <citation type="submission" date="2007-07" db="EMBL/GenBank/DDBJ databases">
        <title>Complete genome sequence of Campylobacter jejuni subsp doylei 269.97 isolated from human blood.</title>
        <authorList>
            <person name="Fouts D.E."/>
            <person name="Mongodin E.F."/>
            <person name="Puiu D."/>
            <person name="Sebastian Y."/>
            <person name="Miller W.G."/>
            <person name="Mandrell R.E."/>
            <person name="Lastovica A.J."/>
            <person name="Nelson K.E."/>
        </authorList>
    </citation>
    <scope>NUCLEOTIDE SEQUENCE [LARGE SCALE GENOMIC DNA]</scope>
    <source>
        <strain>ATCC BAA-1458 / RM4099 / 269.97</strain>
    </source>
</reference>
<keyword id="KW-0028">Amino-acid biosynthesis</keyword>
<keyword id="KW-0055">Arginine biosynthesis</keyword>
<keyword id="KW-0067">ATP-binding</keyword>
<keyword id="KW-0963">Cytoplasm</keyword>
<keyword id="KW-0436">Ligase</keyword>
<keyword id="KW-0547">Nucleotide-binding</keyword>
<organism>
    <name type="scientific">Campylobacter jejuni subsp. doylei (strain ATCC BAA-1458 / RM4099 / 269.97)</name>
    <dbReference type="NCBI Taxonomy" id="360109"/>
    <lineage>
        <taxon>Bacteria</taxon>
        <taxon>Pseudomonadati</taxon>
        <taxon>Campylobacterota</taxon>
        <taxon>Epsilonproteobacteria</taxon>
        <taxon>Campylobacterales</taxon>
        <taxon>Campylobacteraceae</taxon>
        <taxon>Campylobacter</taxon>
    </lineage>
</organism>
<accession>A7H4E9</accession>
<protein>
    <recommendedName>
        <fullName evidence="1">Argininosuccinate synthase</fullName>
        <ecNumber evidence="1">6.3.4.5</ecNumber>
    </recommendedName>
    <alternativeName>
        <fullName evidence="1">Citrulline--aspartate ligase</fullName>
    </alternativeName>
</protein>
<comment type="catalytic activity">
    <reaction evidence="1">
        <text>L-citrulline + L-aspartate + ATP = 2-(N(omega)-L-arginino)succinate + AMP + diphosphate + H(+)</text>
        <dbReference type="Rhea" id="RHEA:10932"/>
        <dbReference type="ChEBI" id="CHEBI:15378"/>
        <dbReference type="ChEBI" id="CHEBI:29991"/>
        <dbReference type="ChEBI" id="CHEBI:30616"/>
        <dbReference type="ChEBI" id="CHEBI:33019"/>
        <dbReference type="ChEBI" id="CHEBI:57472"/>
        <dbReference type="ChEBI" id="CHEBI:57743"/>
        <dbReference type="ChEBI" id="CHEBI:456215"/>
        <dbReference type="EC" id="6.3.4.5"/>
    </reaction>
</comment>
<comment type="pathway">
    <text evidence="1">Amino-acid biosynthesis; L-arginine biosynthesis; L-arginine from L-ornithine and carbamoyl phosphate: step 2/3.</text>
</comment>
<comment type="subunit">
    <text evidence="1">Homotetramer.</text>
</comment>
<comment type="subcellular location">
    <subcellularLocation>
        <location evidence="1">Cytoplasm</location>
    </subcellularLocation>
</comment>
<comment type="similarity">
    <text evidence="1">Belongs to the argininosuccinate synthase family. Type 1 subfamily.</text>
</comment>
<gene>
    <name evidence="1" type="primary">argG</name>
    <name type="ordered locus">JJD26997_1334</name>
</gene>
<sequence length="406" mass="45627">MKNEVKKVVLAYSGGLDTSIILKWLQDEYNCEVVTFTADIGQGEELEPARKKALSLGIKEENIFIKDLRDEFVKDYVFPMFRANAIYEGEYLLGTSIARPLIAKTQAQIALQTGADAVSHGATGKGNDQVRFELGYLAFNPDLKIIAPWREWDLNSREKLLAYAQKHGIDISKKKGKSPYSMDANLLHISYEGLVLEDPAHAPEEDMWRWSKSPKDAPHESEIIELDFQKGDLVAINGEKLSPAGLLTKLNELGCKHGIGRLDIVENRYVGMKSRGCYETPGGTILLKAHRALESITLDREAAHLKDELMPKYASLIYNGYWFSPERMMLQALIDESQIHANGRVKLELYKGNVMVIGRQSANDSLFNAAYCTFEEDEVYNQKDAAGFIKLNALRFIIAGKNGRKF</sequence>
<evidence type="ECO:0000255" key="1">
    <source>
        <dbReference type="HAMAP-Rule" id="MF_00005"/>
    </source>
</evidence>
<dbReference type="EC" id="6.3.4.5" evidence="1"/>
<dbReference type="EMBL" id="CP000768">
    <property type="protein sequence ID" value="ABS44547.1"/>
    <property type="molecule type" value="Genomic_DNA"/>
</dbReference>
<dbReference type="SMR" id="A7H4E9"/>
<dbReference type="KEGG" id="cjd:JJD26997_1334"/>
<dbReference type="HOGENOM" id="CLU_032784_4_2_7"/>
<dbReference type="UniPathway" id="UPA00068">
    <property type="reaction ID" value="UER00113"/>
</dbReference>
<dbReference type="Proteomes" id="UP000002302">
    <property type="component" value="Chromosome"/>
</dbReference>
<dbReference type="GO" id="GO:0005737">
    <property type="term" value="C:cytoplasm"/>
    <property type="evidence" value="ECO:0007669"/>
    <property type="project" value="UniProtKB-SubCell"/>
</dbReference>
<dbReference type="GO" id="GO:0004055">
    <property type="term" value="F:argininosuccinate synthase activity"/>
    <property type="evidence" value="ECO:0007669"/>
    <property type="project" value="UniProtKB-UniRule"/>
</dbReference>
<dbReference type="GO" id="GO:0005524">
    <property type="term" value="F:ATP binding"/>
    <property type="evidence" value="ECO:0007669"/>
    <property type="project" value="UniProtKB-UniRule"/>
</dbReference>
<dbReference type="GO" id="GO:0000053">
    <property type="term" value="P:argininosuccinate metabolic process"/>
    <property type="evidence" value="ECO:0007669"/>
    <property type="project" value="TreeGrafter"/>
</dbReference>
<dbReference type="GO" id="GO:0006526">
    <property type="term" value="P:L-arginine biosynthetic process"/>
    <property type="evidence" value="ECO:0007669"/>
    <property type="project" value="UniProtKB-UniRule"/>
</dbReference>
<dbReference type="GO" id="GO:0000050">
    <property type="term" value="P:urea cycle"/>
    <property type="evidence" value="ECO:0007669"/>
    <property type="project" value="TreeGrafter"/>
</dbReference>
<dbReference type="CDD" id="cd01999">
    <property type="entry name" value="ASS"/>
    <property type="match status" value="1"/>
</dbReference>
<dbReference type="FunFam" id="3.40.50.620:FF:000019">
    <property type="entry name" value="Argininosuccinate synthase"/>
    <property type="match status" value="1"/>
</dbReference>
<dbReference type="FunFam" id="3.90.1260.10:FF:000007">
    <property type="entry name" value="Argininosuccinate synthase"/>
    <property type="match status" value="1"/>
</dbReference>
<dbReference type="Gene3D" id="3.90.1260.10">
    <property type="entry name" value="Argininosuccinate synthetase, chain A, domain 2"/>
    <property type="match status" value="1"/>
</dbReference>
<dbReference type="Gene3D" id="3.40.50.620">
    <property type="entry name" value="HUPs"/>
    <property type="match status" value="1"/>
</dbReference>
<dbReference type="Gene3D" id="1.20.5.470">
    <property type="entry name" value="Single helix bin"/>
    <property type="match status" value="1"/>
</dbReference>
<dbReference type="HAMAP" id="MF_00005">
    <property type="entry name" value="Arg_succ_synth_type1"/>
    <property type="match status" value="1"/>
</dbReference>
<dbReference type="InterPro" id="IPR048268">
    <property type="entry name" value="Arginosuc_syn_C"/>
</dbReference>
<dbReference type="InterPro" id="IPR048267">
    <property type="entry name" value="Arginosuc_syn_N"/>
</dbReference>
<dbReference type="InterPro" id="IPR001518">
    <property type="entry name" value="Arginosuc_synth"/>
</dbReference>
<dbReference type="InterPro" id="IPR018223">
    <property type="entry name" value="Arginosuc_synth_CS"/>
</dbReference>
<dbReference type="InterPro" id="IPR023434">
    <property type="entry name" value="Arginosuc_synth_type_1_subfam"/>
</dbReference>
<dbReference type="InterPro" id="IPR024074">
    <property type="entry name" value="AS_cat/multimer_dom_body"/>
</dbReference>
<dbReference type="InterPro" id="IPR014729">
    <property type="entry name" value="Rossmann-like_a/b/a_fold"/>
</dbReference>
<dbReference type="NCBIfam" id="TIGR00032">
    <property type="entry name" value="argG"/>
    <property type="match status" value="1"/>
</dbReference>
<dbReference type="NCBIfam" id="NF001770">
    <property type="entry name" value="PRK00509.1"/>
    <property type="match status" value="1"/>
</dbReference>
<dbReference type="PANTHER" id="PTHR11587">
    <property type="entry name" value="ARGININOSUCCINATE SYNTHASE"/>
    <property type="match status" value="1"/>
</dbReference>
<dbReference type="PANTHER" id="PTHR11587:SF2">
    <property type="entry name" value="ARGININOSUCCINATE SYNTHASE"/>
    <property type="match status" value="1"/>
</dbReference>
<dbReference type="Pfam" id="PF20979">
    <property type="entry name" value="Arginosuc_syn_C"/>
    <property type="match status" value="1"/>
</dbReference>
<dbReference type="Pfam" id="PF00764">
    <property type="entry name" value="Arginosuc_synth"/>
    <property type="match status" value="1"/>
</dbReference>
<dbReference type="SUPFAM" id="SSF52402">
    <property type="entry name" value="Adenine nucleotide alpha hydrolases-like"/>
    <property type="match status" value="1"/>
</dbReference>
<dbReference type="SUPFAM" id="SSF69864">
    <property type="entry name" value="Argininosuccinate synthetase, C-terminal domain"/>
    <property type="match status" value="1"/>
</dbReference>
<dbReference type="PROSITE" id="PS00564">
    <property type="entry name" value="ARGININOSUCCIN_SYN_1"/>
    <property type="match status" value="1"/>
</dbReference>
<dbReference type="PROSITE" id="PS00565">
    <property type="entry name" value="ARGININOSUCCIN_SYN_2"/>
    <property type="match status" value="1"/>
</dbReference>
<proteinExistence type="inferred from homology"/>